<proteinExistence type="inferred from homology"/>
<comment type="function">
    <text evidence="1">Binds to 23S rRNA. Forms part of two intersubunit bridges in the 70S ribosome.</text>
</comment>
<comment type="subunit">
    <text evidence="1">Part of the 50S ribosomal subunit. Forms a cluster with proteins L3 and L19. In the 70S ribosome, L14 and L19 interact and together make contacts with the 16S rRNA in bridges B5 and B8.</text>
</comment>
<comment type="similarity">
    <text evidence="1">Belongs to the universal ribosomal protein uL14 family.</text>
</comment>
<protein>
    <recommendedName>
        <fullName evidence="1">Large ribosomal subunit protein uL14</fullName>
    </recommendedName>
    <alternativeName>
        <fullName evidence="2">50S ribosomal protein L14</fullName>
    </alternativeName>
</protein>
<evidence type="ECO:0000255" key="1">
    <source>
        <dbReference type="HAMAP-Rule" id="MF_01367"/>
    </source>
</evidence>
<evidence type="ECO:0000305" key="2"/>
<accession>Q82X79</accession>
<organism>
    <name type="scientific">Nitrosomonas europaea (strain ATCC 19718 / CIP 103999 / KCTC 2705 / NBRC 14298)</name>
    <dbReference type="NCBI Taxonomy" id="228410"/>
    <lineage>
        <taxon>Bacteria</taxon>
        <taxon>Pseudomonadati</taxon>
        <taxon>Pseudomonadota</taxon>
        <taxon>Betaproteobacteria</taxon>
        <taxon>Nitrosomonadales</taxon>
        <taxon>Nitrosomonadaceae</taxon>
        <taxon>Nitrosomonas</taxon>
    </lineage>
</organism>
<sequence length="122" mass="13248">MIQMQSLLKVADNTGARTVMCIKVLGGSKRRFAGIGDVIKVAVKDAAPRGRIKRGEVYNAVIVRTAKGIRRADGSLVKFDTNAAVILNNKLEPIGTRIFGPVTRELRTAKFMKIVSLAPEVI</sequence>
<keyword id="KW-1185">Reference proteome</keyword>
<keyword id="KW-0687">Ribonucleoprotein</keyword>
<keyword id="KW-0689">Ribosomal protein</keyword>
<keyword id="KW-0694">RNA-binding</keyword>
<keyword id="KW-0699">rRNA-binding</keyword>
<feature type="chain" id="PRO_1000055650" description="Large ribosomal subunit protein uL14">
    <location>
        <begin position="1"/>
        <end position="122"/>
    </location>
</feature>
<dbReference type="EMBL" id="AL954747">
    <property type="protein sequence ID" value="CAD84322.1"/>
    <property type="molecule type" value="Genomic_DNA"/>
</dbReference>
<dbReference type="RefSeq" id="WP_011111046.1">
    <property type="nucleotide sequence ID" value="NC_004757.1"/>
</dbReference>
<dbReference type="SMR" id="Q82X79"/>
<dbReference type="STRING" id="228410.NE0411"/>
<dbReference type="GeneID" id="87103620"/>
<dbReference type="KEGG" id="neu:NE0411"/>
<dbReference type="eggNOG" id="COG0093">
    <property type="taxonomic scope" value="Bacteria"/>
</dbReference>
<dbReference type="HOGENOM" id="CLU_095071_2_1_4"/>
<dbReference type="OrthoDB" id="9806379at2"/>
<dbReference type="PhylomeDB" id="Q82X79"/>
<dbReference type="Proteomes" id="UP000001416">
    <property type="component" value="Chromosome"/>
</dbReference>
<dbReference type="GO" id="GO:0022625">
    <property type="term" value="C:cytosolic large ribosomal subunit"/>
    <property type="evidence" value="ECO:0007669"/>
    <property type="project" value="TreeGrafter"/>
</dbReference>
<dbReference type="GO" id="GO:0070180">
    <property type="term" value="F:large ribosomal subunit rRNA binding"/>
    <property type="evidence" value="ECO:0007669"/>
    <property type="project" value="TreeGrafter"/>
</dbReference>
<dbReference type="GO" id="GO:0003735">
    <property type="term" value="F:structural constituent of ribosome"/>
    <property type="evidence" value="ECO:0007669"/>
    <property type="project" value="InterPro"/>
</dbReference>
<dbReference type="GO" id="GO:0006412">
    <property type="term" value="P:translation"/>
    <property type="evidence" value="ECO:0007669"/>
    <property type="project" value="UniProtKB-UniRule"/>
</dbReference>
<dbReference type="CDD" id="cd00337">
    <property type="entry name" value="Ribosomal_uL14"/>
    <property type="match status" value="1"/>
</dbReference>
<dbReference type="FunFam" id="2.40.150.20:FF:000001">
    <property type="entry name" value="50S ribosomal protein L14"/>
    <property type="match status" value="1"/>
</dbReference>
<dbReference type="Gene3D" id="2.40.150.20">
    <property type="entry name" value="Ribosomal protein L14"/>
    <property type="match status" value="1"/>
</dbReference>
<dbReference type="HAMAP" id="MF_01367">
    <property type="entry name" value="Ribosomal_uL14"/>
    <property type="match status" value="1"/>
</dbReference>
<dbReference type="InterPro" id="IPR000218">
    <property type="entry name" value="Ribosomal_uL14"/>
</dbReference>
<dbReference type="InterPro" id="IPR005745">
    <property type="entry name" value="Ribosomal_uL14_bac-type"/>
</dbReference>
<dbReference type="InterPro" id="IPR019972">
    <property type="entry name" value="Ribosomal_uL14_CS"/>
</dbReference>
<dbReference type="InterPro" id="IPR036853">
    <property type="entry name" value="Ribosomal_uL14_sf"/>
</dbReference>
<dbReference type="NCBIfam" id="TIGR01067">
    <property type="entry name" value="rplN_bact"/>
    <property type="match status" value="1"/>
</dbReference>
<dbReference type="PANTHER" id="PTHR11761">
    <property type="entry name" value="50S/60S RIBOSOMAL PROTEIN L14/L23"/>
    <property type="match status" value="1"/>
</dbReference>
<dbReference type="PANTHER" id="PTHR11761:SF3">
    <property type="entry name" value="LARGE RIBOSOMAL SUBUNIT PROTEIN UL14M"/>
    <property type="match status" value="1"/>
</dbReference>
<dbReference type="Pfam" id="PF00238">
    <property type="entry name" value="Ribosomal_L14"/>
    <property type="match status" value="1"/>
</dbReference>
<dbReference type="SMART" id="SM01374">
    <property type="entry name" value="Ribosomal_L14"/>
    <property type="match status" value="1"/>
</dbReference>
<dbReference type="SUPFAM" id="SSF50193">
    <property type="entry name" value="Ribosomal protein L14"/>
    <property type="match status" value="1"/>
</dbReference>
<dbReference type="PROSITE" id="PS00049">
    <property type="entry name" value="RIBOSOMAL_L14"/>
    <property type="match status" value="1"/>
</dbReference>
<reference key="1">
    <citation type="journal article" date="2003" name="J. Bacteriol.">
        <title>Complete genome sequence of the ammonia-oxidizing bacterium and obligate chemolithoautotroph Nitrosomonas europaea.</title>
        <authorList>
            <person name="Chain P."/>
            <person name="Lamerdin J.E."/>
            <person name="Larimer F.W."/>
            <person name="Regala W."/>
            <person name="Lao V."/>
            <person name="Land M.L."/>
            <person name="Hauser L."/>
            <person name="Hooper A.B."/>
            <person name="Klotz M.G."/>
            <person name="Norton J."/>
            <person name="Sayavedra-Soto L.A."/>
            <person name="Arciero D.M."/>
            <person name="Hommes N.G."/>
            <person name="Whittaker M.M."/>
            <person name="Arp D.J."/>
        </authorList>
    </citation>
    <scope>NUCLEOTIDE SEQUENCE [LARGE SCALE GENOMIC DNA]</scope>
    <source>
        <strain>ATCC 19718 / CIP 103999 / KCTC 2705 / NBRC 14298</strain>
    </source>
</reference>
<gene>
    <name evidence="1" type="primary">rplN</name>
    <name type="ordered locus">NE0411</name>
</gene>
<name>RL14_NITEU</name>